<dbReference type="EMBL" id="AK036832">
    <property type="protein sequence ID" value="BAC29597.1"/>
    <property type="molecule type" value="mRNA"/>
</dbReference>
<dbReference type="EMBL" id="AK129209">
    <property type="protein sequence ID" value="BAC98019.1"/>
    <property type="status" value="ALT_SEQ"/>
    <property type="molecule type" value="Transcribed_RNA"/>
</dbReference>
<dbReference type="EMBL" id="BC021523">
    <property type="protein sequence ID" value="AAH21523.1"/>
    <property type="status" value="ALT_INIT"/>
    <property type="molecule type" value="mRNA"/>
</dbReference>
<dbReference type="EMBL" id="BC139228">
    <property type="protein sequence ID" value="AAI39229.1"/>
    <property type="molecule type" value="mRNA"/>
</dbReference>
<dbReference type="EMBL" id="BC139229">
    <property type="protein sequence ID" value="AAI39230.1"/>
    <property type="molecule type" value="mRNA"/>
</dbReference>
<dbReference type="RefSeq" id="NP_766199.1">
    <property type="nucleotide sequence ID" value="NM_172611.4"/>
</dbReference>
<dbReference type="SMR" id="Q8CB44"/>
<dbReference type="BioGRID" id="230188">
    <property type="interactions" value="2"/>
</dbReference>
<dbReference type="FunCoup" id="Q8CB44">
    <property type="interactions" value="874"/>
</dbReference>
<dbReference type="STRING" id="10090.ENSMUSP00000086321"/>
<dbReference type="iPTMnet" id="Q8CB44"/>
<dbReference type="PhosphoSitePlus" id="Q8CB44"/>
<dbReference type="PaxDb" id="10090-ENSMUSP00000086321"/>
<dbReference type="PeptideAtlas" id="Q8CB44"/>
<dbReference type="ProteomicsDB" id="271324"/>
<dbReference type="Pumba" id="Q8CB44"/>
<dbReference type="Antibodypedia" id="28118">
    <property type="antibodies" value="49 antibodies from 15 providers"/>
</dbReference>
<dbReference type="Ensembl" id="ENSMUST00000088931.10">
    <property type="protein sequence ID" value="ENSMUSP00000086321.4"/>
    <property type="gene ID" value="ENSMUSG00000035900.19"/>
</dbReference>
<dbReference type="GeneID" id="223752"/>
<dbReference type="KEGG" id="mmu:223752"/>
<dbReference type="UCSC" id="uc007xdv.3">
    <property type="organism name" value="mouse"/>
</dbReference>
<dbReference type="AGR" id="MGI:2676308"/>
<dbReference type="CTD" id="23151"/>
<dbReference type="MGI" id="MGI:2676308">
    <property type="gene designation" value="Gramd4"/>
</dbReference>
<dbReference type="VEuPathDB" id="HostDB:ENSMUSG00000035900"/>
<dbReference type="eggNOG" id="ENOG502QPMR">
    <property type="taxonomic scope" value="Eukaryota"/>
</dbReference>
<dbReference type="GeneTree" id="ENSGT00390000010968"/>
<dbReference type="HOGENOM" id="CLU_028241_0_0_1"/>
<dbReference type="InParanoid" id="Q8CB44"/>
<dbReference type="OMA" id="CSACYES"/>
<dbReference type="OrthoDB" id="1708389at2759"/>
<dbReference type="PhylomeDB" id="Q8CB44"/>
<dbReference type="TreeFam" id="TF320445"/>
<dbReference type="BioGRID-ORCS" id="223752">
    <property type="hits" value="2 hits in 77 CRISPR screens"/>
</dbReference>
<dbReference type="ChiTaRS" id="Gramd4">
    <property type="organism name" value="mouse"/>
</dbReference>
<dbReference type="PRO" id="PR:Q8CB44"/>
<dbReference type="Proteomes" id="UP000000589">
    <property type="component" value="Chromosome 15"/>
</dbReference>
<dbReference type="RNAct" id="Q8CB44">
    <property type="molecule type" value="protein"/>
</dbReference>
<dbReference type="Bgee" id="ENSMUSG00000035900">
    <property type="expression patterns" value="Expressed in interventricular septum and 246 other cell types or tissues"/>
</dbReference>
<dbReference type="ExpressionAtlas" id="Q8CB44">
    <property type="expression patterns" value="baseline and differential"/>
</dbReference>
<dbReference type="GO" id="GO:0005789">
    <property type="term" value="C:endoplasmic reticulum membrane"/>
    <property type="evidence" value="ECO:0007669"/>
    <property type="project" value="UniProtKB-SubCell"/>
</dbReference>
<dbReference type="GO" id="GO:0031966">
    <property type="term" value="C:mitochondrial membrane"/>
    <property type="evidence" value="ECO:0007669"/>
    <property type="project" value="UniProtKB-SubCell"/>
</dbReference>
<dbReference type="GO" id="GO:0006915">
    <property type="term" value="P:apoptotic process"/>
    <property type="evidence" value="ECO:0007669"/>
    <property type="project" value="UniProtKB-KW"/>
</dbReference>
<dbReference type="GO" id="GO:0034164">
    <property type="term" value="P:negative regulation of toll-like receptor 9 signaling pathway"/>
    <property type="evidence" value="ECO:0000315"/>
    <property type="project" value="UniProtKB"/>
</dbReference>
<dbReference type="GO" id="GO:0043065">
    <property type="term" value="P:positive regulation of apoptotic process"/>
    <property type="evidence" value="ECO:0007669"/>
    <property type="project" value="Ensembl"/>
</dbReference>
<dbReference type="CDD" id="cd13221">
    <property type="entry name" value="PH-GRAM_GRAMDC4"/>
    <property type="match status" value="1"/>
</dbReference>
<dbReference type="FunFam" id="2.30.29.30:FF:000225">
    <property type="entry name" value="GRAM domain containing 4"/>
    <property type="match status" value="1"/>
</dbReference>
<dbReference type="Gene3D" id="2.30.29.30">
    <property type="entry name" value="Pleckstrin-homology domain (PH domain)/Phosphotyrosine-binding domain (PTB)"/>
    <property type="match status" value="1"/>
</dbReference>
<dbReference type="InterPro" id="IPR004182">
    <property type="entry name" value="GRAM"/>
</dbReference>
<dbReference type="InterPro" id="IPR037847">
    <property type="entry name" value="GRAMDC4"/>
</dbReference>
<dbReference type="InterPro" id="IPR037845">
    <property type="entry name" value="GRAMDC4_PH-GRAM"/>
</dbReference>
<dbReference type="InterPro" id="IPR011993">
    <property type="entry name" value="PH-like_dom_sf"/>
</dbReference>
<dbReference type="PANTHER" id="PTHR37402">
    <property type="entry name" value="GRAM DOMAIN-CONTAINING PROTEIN 4"/>
    <property type="match status" value="1"/>
</dbReference>
<dbReference type="PANTHER" id="PTHR37402:SF1">
    <property type="entry name" value="GRAM DOMAIN-CONTAINING PROTEIN 4"/>
    <property type="match status" value="1"/>
</dbReference>
<dbReference type="Pfam" id="PF02893">
    <property type="entry name" value="GRAM"/>
    <property type="match status" value="1"/>
</dbReference>
<dbReference type="SMART" id="SM00568">
    <property type="entry name" value="GRAM"/>
    <property type="match status" value="1"/>
</dbReference>
<accession>Q8CB44</accession>
<accession>B2RTC1</accession>
<accession>Q6ZQ52</accession>
<accession>Q8VDL6</accession>
<organism>
    <name type="scientific">Mus musculus</name>
    <name type="common">Mouse</name>
    <dbReference type="NCBI Taxonomy" id="10090"/>
    <lineage>
        <taxon>Eukaryota</taxon>
        <taxon>Metazoa</taxon>
        <taxon>Chordata</taxon>
        <taxon>Craniata</taxon>
        <taxon>Vertebrata</taxon>
        <taxon>Euteleostomi</taxon>
        <taxon>Mammalia</taxon>
        <taxon>Eutheria</taxon>
        <taxon>Euarchontoglires</taxon>
        <taxon>Glires</taxon>
        <taxon>Rodentia</taxon>
        <taxon>Myomorpha</taxon>
        <taxon>Muroidea</taxon>
        <taxon>Muridae</taxon>
        <taxon>Murinae</taxon>
        <taxon>Mus</taxon>
        <taxon>Mus</taxon>
    </lineage>
</organism>
<keyword id="KW-0053">Apoptosis</keyword>
<keyword id="KW-0175">Coiled coil</keyword>
<keyword id="KW-0256">Endoplasmic reticulum</keyword>
<keyword id="KW-0472">Membrane</keyword>
<keyword id="KW-0496">Mitochondrion</keyword>
<keyword id="KW-0597">Phosphoprotein</keyword>
<keyword id="KW-1185">Reference proteome</keyword>
<keyword id="KW-0812">Transmembrane</keyword>
<keyword id="KW-1133">Transmembrane helix</keyword>
<evidence type="ECO:0000250" key="1"/>
<evidence type="ECO:0000250" key="2">
    <source>
        <dbReference type="UniProtKB" id="Q6IC98"/>
    </source>
</evidence>
<evidence type="ECO:0000255" key="3"/>
<evidence type="ECO:0000256" key="4">
    <source>
        <dbReference type="SAM" id="MobiDB-lite"/>
    </source>
</evidence>
<evidence type="ECO:0000269" key="5">
    <source>
    </source>
</evidence>
<evidence type="ECO:0000305" key="6"/>
<evidence type="ECO:0000312" key="7">
    <source>
        <dbReference type="MGI" id="MGI:2676308"/>
    </source>
</evidence>
<evidence type="ECO:0007744" key="8">
    <source>
    </source>
</evidence>
<sequence>MGIASHSAFRERESSPTGASLDASPRPWDKGLSGREPPRHVQVRPRSAVLNMLRRLDRIRFRGHKREDLLDLAESPNASDTECGDEIPLKTPRPSPRDSEELRDPAGPGTLIMAAGVQDFNRTEFDRLNEIKGHLEIALLEKHFLQEELRKLREETNSEMLRQELDRERQRRIELEQKMQEVLKARSEEQPAQPQQPPKGQSQASNGTGTERRSQGLASRVQKWFYERFGEYIEDFRFQPEENTVETEEPLSARRLTENMRRLKRGAKPVTNFVKNLSALSDWYSIYTSAIAFTVYMNAVWHGWAIPMFLFLAILRLSLNYLIARGWRIQWSIVPEVSEAVEPAKEDLTVSEKFQLVLDVAQKAQNLFGKMADILEKIKNLFMWVQPETTQKLYVALWAAFLASCFFPYRLVGLAVGLYAGIKFFLIDFIFKRCPRLRAKYDTPYIIWRSLPTDPQLKERAGATVSRRLQTASSRSYVSSAPAGLSKDEDAGRFHSTKKGNFHEIFNLTENERPLAVCENGWRCCLINRDRKMPTDYIRNGVLYVTENYLCFESSKSGSSKRNKVIKLMDITDIQKYKVLSVLPGSGMGIAVSTPSTQKPLVFGAMVHRDEAFETIFSQYVKITSAAASGGDS</sequence>
<protein>
    <recommendedName>
        <fullName evidence="6">GRAM domain-containing protein 4</fullName>
    </recommendedName>
    <alternativeName>
        <fullName>Death-inducing protein</fullName>
    </alternativeName>
</protein>
<reference key="1">
    <citation type="journal article" date="2005" name="Science">
        <title>The transcriptional landscape of the mammalian genome.</title>
        <authorList>
            <person name="Carninci P."/>
            <person name="Kasukawa T."/>
            <person name="Katayama S."/>
            <person name="Gough J."/>
            <person name="Frith M.C."/>
            <person name="Maeda N."/>
            <person name="Oyama R."/>
            <person name="Ravasi T."/>
            <person name="Lenhard B."/>
            <person name="Wells C."/>
            <person name="Kodzius R."/>
            <person name="Shimokawa K."/>
            <person name="Bajic V.B."/>
            <person name="Brenner S.E."/>
            <person name="Batalov S."/>
            <person name="Forrest A.R."/>
            <person name="Zavolan M."/>
            <person name="Davis M.J."/>
            <person name="Wilming L.G."/>
            <person name="Aidinis V."/>
            <person name="Allen J.E."/>
            <person name="Ambesi-Impiombato A."/>
            <person name="Apweiler R."/>
            <person name="Aturaliya R.N."/>
            <person name="Bailey T.L."/>
            <person name="Bansal M."/>
            <person name="Baxter L."/>
            <person name="Beisel K.W."/>
            <person name="Bersano T."/>
            <person name="Bono H."/>
            <person name="Chalk A.M."/>
            <person name="Chiu K.P."/>
            <person name="Choudhary V."/>
            <person name="Christoffels A."/>
            <person name="Clutterbuck D.R."/>
            <person name="Crowe M.L."/>
            <person name="Dalla E."/>
            <person name="Dalrymple B.P."/>
            <person name="de Bono B."/>
            <person name="Della Gatta G."/>
            <person name="di Bernardo D."/>
            <person name="Down T."/>
            <person name="Engstrom P."/>
            <person name="Fagiolini M."/>
            <person name="Faulkner G."/>
            <person name="Fletcher C.F."/>
            <person name="Fukushima T."/>
            <person name="Furuno M."/>
            <person name="Futaki S."/>
            <person name="Gariboldi M."/>
            <person name="Georgii-Hemming P."/>
            <person name="Gingeras T.R."/>
            <person name="Gojobori T."/>
            <person name="Green R.E."/>
            <person name="Gustincich S."/>
            <person name="Harbers M."/>
            <person name="Hayashi Y."/>
            <person name="Hensch T.K."/>
            <person name="Hirokawa N."/>
            <person name="Hill D."/>
            <person name="Huminiecki L."/>
            <person name="Iacono M."/>
            <person name="Ikeo K."/>
            <person name="Iwama A."/>
            <person name="Ishikawa T."/>
            <person name="Jakt M."/>
            <person name="Kanapin A."/>
            <person name="Katoh M."/>
            <person name="Kawasawa Y."/>
            <person name="Kelso J."/>
            <person name="Kitamura H."/>
            <person name="Kitano H."/>
            <person name="Kollias G."/>
            <person name="Krishnan S.P."/>
            <person name="Kruger A."/>
            <person name="Kummerfeld S.K."/>
            <person name="Kurochkin I.V."/>
            <person name="Lareau L.F."/>
            <person name="Lazarevic D."/>
            <person name="Lipovich L."/>
            <person name="Liu J."/>
            <person name="Liuni S."/>
            <person name="McWilliam S."/>
            <person name="Madan Babu M."/>
            <person name="Madera M."/>
            <person name="Marchionni L."/>
            <person name="Matsuda H."/>
            <person name="Matsuzawa S."/>
            <person name="Miki H."/>
            <person name="Mignone F."/>
            <person name="Miyake S."/>
            <person name="Morris K."/>
            <person name="Mottagui-Tabar S."/>
            <person name="Mulder N."/>
            <person name="Nakano N."/>
            <person name="Nakauchi H."/>
            <person name="Ng P."/>
            <person name="Nilsson R."/>
            <person name="Nishiguchi S."/>
            <person name="Nishikawa S."/>
            <person name="Nori F."/>
            <person name="Ohara O."/>
            <person name="Okazaki Y."/>
            <person name="Orlando V."/>
            <person name="Pang K.C."/>
            <person name="Pavan W.J."/>
            <person name="Pavesi G."/>
            <person name="Pesole G."/>
            <person name="Petrovsky N."/>
            <person name="Piazza S."/>
            <person name="Reed J."/>
            <person name="Reid J.F."/>
            <person name="Ring B.Z."/>
            <person name="Ringwald M."/>
            <person name="Rost B."/>
            <person name="Ruan Y."/>
            <person name="Salzberg S.L."/>
            <person name="Sandelin A."/>
            <person name="Schneider C."/>
            <person name="Schoenbach C."/>
            <person name="Sekiguchi K."/>
            <person name="Semple C.A."/>
            <person name="Seno S."/>
            <person name="Sessa L."/>
            <person name="Sheng Y."/>
            <person name="Shibata Y."/>
            <person name="Shimada H."/>
            <person name="Shimada K."/>
            <person name="Silva D."/>
            <person name="Sinclair B."/>
            <person name="Sperling S."/>
            <person name="Stupka E."/>
            <person name="Sugiura K."/>
            <person name="Sultana R."/>
            <person name="Takenaka Y."/>
            <person name="Taki K."/>
            <person name="Tammoja K."/>
            <person name="Tan S.L."/>
            <person name="Tang S."/>
            <person name="Taylor M.S."/>
            <person name="Tegner J."/>
            <person name="Teichmann S.A."/>
            <person name="Ueda H.R."/>
            <person name="van Nimwegen E."/>
            <person name="Verardo R."/>
            <person name="Wei C.L."/>
            <person name="Yagi K."/>
            <person name="Yamanishi H."/>
            <person name="Zabarovsky E."/>
            <person name="Zhu S."/>
            <person name="Zimmer A."/>
            <person name="Hide W."/>
            <person name="Bult C."/>
            <person name="Grimmond S.M."/>
            <person name="Teasdale R.D."/>
            <person name="Liu E.T."/>
            <person name="Brusic V."/>
            <person name="Quackenbush J."/>
            <person name="Wahlestedt C."/>
            <person name="Mattick J.S."/>
            <person name="Hume D.A."/>
            <person name="Kai C."/>
            <person name="Sasaki D."/>
            <person name="Tomaru Y."/>
            <person name="Fukuda S."/>
            <person name="Kanamori-Katayama M."/>
            <person name="Suzuki M."/>
            <person name="Aoki J."/>
            <person name="Arakawa T."/>
            <person name="Iida J."/>
            <person name="Imamura K."/>
            <person name="Itoh M."/>
            <person name="Kato T."/>
            <person name="Kawaji H."/>
            <person name="Kawagashira N."/>
            <person name="Kawashima T."/>
            <person name="Kojima M."/>
            <person name="Kondo S."/>
            <person name="Konno H."/>
            <person name="Nakano K."/>
            <person name="Ninomiya N."/>
            <person name="Nishio T."/>
            <person name="Okada M."/>
            <person name="Plessy C."/>
            <person name="Shibata K."/>
            <person name="Shiraki T."/>
            <person name="Suzuki S."/>
            <person name="Tagami M."/>
            <person name="Waki K."/>
            <person name="Watahiki A."/>
            <person name="Okamura-Oho Y."/>
            <person name="Suzuki H."/>
            <person name="Kawai J."/>
            <person name="Hayashizaki Y."/>
        </authorList>
    </citation>
    <scope>NUCLEOTIDE SEQUENCE [LARGE SCALE MRNA]</scope>
    <source>
        <strain>C57BL/6J</strain>
        <tissue>Vagina</tissue>
    </source>
</reference>
<reference key="2">
    <citation type="journal article" date="2003" name="DNA Res.">
        <title>Prediction of the coding sequences of mouse homologues of KIAA gene: III. The complete nucleotide sequences of 500 mouse KIAA-homologous cDNAs identified by screening of terminal sequences of cDNA clones randomly sampled from size-fractionated libraries.</title>
        <authorList>
            <person name="Okazaki N."/>
            <person name="Kikuno R."/>
            <person name="Ohara R."/>
            <person name="Inamoto S."/>
            <person name="Koseki H."/>
            <person name="Hiraoka S."/>
            <person name="Saga Y."/>
            <person name="Nagase T."/>
            <person name="Ohara O."/>
            <person name="Koga H."/>
        </authorList>
    </citation>
    <scope>NUCLEOTIDE SEQUENCE [LARGE SCALE MRNA] OF 57-633</scope>
</reference>
<reference key="3">
    <citation type="journal article" date="2004" name="Genome Res.">
        <title>The status, quality, and expansion of the NIH full-length cDNA project: the Mammalian Gene Collection (MGC).</title>
        <authorList>
            <consortium name="The MGC Project Team"/>
        </authorList>
    </citation>
    <scope>NUCLEOTIDE SEQUENCE [LARGE SCALE MRNA]</scope>
    <source>
        <strain>FVB/N</strain>
        <tissue>Brain</tissue>
        <tissue>Mammary tumor</tissue>
    </source>
</reference>
<reference key="4">
    <citation type="journal article" date="2010" name="Cell">
        <title>A tissue-specific atlas of mouse protein phosphorylation and expression.</title>
        <authorList>
            <person name="Huttlin E.L."/>
            <person name="Jedrychowski M.P."/>
            <person name="Elias J.E."/>
            <person name="Goswami T."/>
            <person name="Rad R."/>
            <person name="Beausoleil S.A."/>
            <person name="Villen J."/>
            <person name="Haas W."/>
            <person name="Sowa M.E."/>
            <person name="Gygi S.P."/>
        </authorList>
    </citation>
    <scope>PHOSPHORYLATION [LARGE SCALE ANALYSIS] AT SER-75</scope>
    <scope>IDENTIFICATION BY MASS SPECTROMETRY [LARGE SCALE ANALYSIS]</scope>
    <source>
        <tissue>Heart</tissue>
        <tissue>Kidney</tissue>
        <tissue>Spleen</tissue>
    </source>
</reference>
<reference key="5">
    <citation type="journal article" date="2015" name="J. Immunol.">
        <title>Endoplasmic Protein Nogo-B (RTN4-B) Interacts with GRAMD4 and Regulates TLR9-Mediated Innate Immune Responses.</title>
        <authorList>
            <person name="Kimura T."/>
            <person name="Endo S."/>
            <person name="Inui M."/>
            <person name="Saitoh S."/>
            <person name="Miyake K."/>
            <person name="Takai T."/>
        </authorList>
    </citation>
    <scope>FUNCTION</scope>
    <scope>INTERACTION WITH RTN4</scope>
    <scope>SUBCELLULAR LOCATION</scope>
</reference>
<comment type="function">
    <text evidence="2 5">Plays a role as a mediator of E2F1-induced apoptosis in the absence of p53/TP53 (By similarity). Inhibits TLR9 response to nucelic acids and regulates TLR9-mediated innate immune response (PubMed:25917084).</text>
</comment>
<comment type="subunit">
    <text evidence="5">Interacts with RTN4 (isoform B).</text>
</comment>
<comment type="subcellular location">
    <subcellularLocation>
        <location evidence="2">Mitochondrion membrane</location>
        <topology evidence="3">Multi-pass membrane protein</topology>
    </subcellularLocation>
    <subcellularLocation>
        <location evidence="5">Endoplasmic reticulum membrane</location>
        <topology evidence="3">Multi-pass membrane protein</topology>
    </subcellularLocation>
    <text evidence="1">Colocalizes with COX4I1.</text>
</comment>
<comment type="caution">
    <text evidence="6">It is uncertain whether Met-1 or Met-52 is the initiator.</text>
</comment>
<comment type="sequence caution" evidence="6">
    <conflict type="erroneous initiation">
        <sequence resource="EMBL-CDS" id="AAH21523"/>
    </conflict>
    <text>Extended N-terminus.</text>
</comment>
<comment type="sequence caution" evidence="6">
    <conflict type="miscellaneous discrepancy">
        <sequence resource="EMBL-CDS" id="BAC98019"/>
    </conflict>
    <text>The sequence differs from that shown because it seems to be derived from a pre-mRNA.</text>
</comment>
<name>GRAM4_MOUSE</name>
<gene>
    <name evidence="7" type="primary">Gramd4</name>
    <name type="synonym">Dip</name>
    <name type="synonym">Kiaa0767</name>
</gene>
<proteinExistence type="evidence at protein level"/>
<feature type="chain" id="PRO_0000328743" description="GRAM domain-containing protein 4">
    <location>
        <begin position="1"/>
        <end position="633"/>
    </location>
</feature>
<feature type="transmembrane region" description="Helical" evidence="3">
    <location>
        <begin position="295"/>
        <end position="315"/>
    </location>
</feature>
<feature type="transmembrane region" description="Helical" evidence="3">
    <location>
        <begin position="389"/>
        <end position="409"/>
    </location>
</feature>
<feature type="transmembrane region" description="Helical" evidence="3">
    <location>
        <begin position="411"/>
        <end position="431"/>
    </location>
</feature>
<feature type="domain" description="GRAM">
    <location>
        <begin position="500"/>
        <end position="578"/>
    </location>
</feature>
<feature type="region of interest" description="Disordered" evidence="4">
    <location>
        <begin position="1"/>
        <end position="46"/>
    </location>
</feature>
<feature type="region of interest" description="Disordered" evidence="4">
    <location>
        <begin position="72"/>
        <end position="109"/>
    </location>
</feature>
<feature type="region of interest" description="Disordered" evidence="4">
    <location>
        <begin position="182"/>
        <end position="216"/>
    </location>
</feature>
<feature type="coiled-coil region" evidence="3">
    <location>
        <begin position="134"/>
        <end position="190"/>
    </location>
</feature>
<feature type="compositionally biased region" description="Basic and acidic residues" evidence="4">
    <location>
        <begin position="27"/>
        <end position="39"/>
    </location>
</feature>
<feature type="compositionally biased region" description="Basic and acidic residues" evidence="4">
    <location>
        <begin position="95"/>
        <end position="104"/>
    </location>
</feature>
<feature type="compositionally biased region" description="Low complexity" evidence="4">
    <location>
        <begin position="190"/>
        <end position="205"/>
    </location>
</feature>
<feature type="modified residue" description="Phosphoserine" evidence="8">
    <location>
        <position position="75"/>
    </location>
</feature>
<feature type="modified residue" description="Phosphoserine" evidence="2">
    <location>
        <position position="79"/>
    </location>
</feature>